<feature type="chain" id="PRO_0000208093" description="Putative O-acetyltransferase SA0834">
    <location>
        <begin position="1"/>
        <end position="604"/>
    </location>
</feature>
<feature type="transmembrane region" description="Helical" evidence="2">
    <location>
        <begin position="15"/>
        <end position="35"/>
    </location>
</feature>
<feature type="transmembrane region" description="Helical" evidence="2">
    <location>
        <begin position="43"/>
        <end position="63"/>
    </location>
</feature>
<feature type="transmembrane region" description="Helical" evidence="2">
    <location>
        <begin position="85"/>
        <end position="105"/>
    </location>
</feature>
<feature type="transmembrane region" description="Helical" evidence="2">
    <location>
        <begin position="150"/>
        <end position="170"/>
    </location>
</feature>
<feature type="transmembrane region" description="Helical" evidence="2">
    <location>
        <begin position="176"/>
        <end position="196"/>
    </location>
</feature>
<feature type="transmembrane region" description="Helical" evidence="2">
    <location>
        <begin position="212"/>
        <end position="232"/>
    </location>
</feature>
<feature type="transmembrane region" description="Helical" evidence="2">
    <location>
        <begin position="240"/>
        <end position="260"/>
    </location>
</feature>
<feature type="transmembrane region" description="Helical" evidence="2">
    <location>
        <begin position="267"/>
        <end position="287"/>
    </location>
</feature>
<feature type="transmembrane region" description="Helical" evidence="2">
    <location>
        <begin position="310"/>
        <end position="330"/>
    </location>
</feature>
<feature type="transmembrane region" description="Helical" evidence="2">
    <location>
        <begin position="332"/>
        <end position="352"/>
    </location>
</feature>
<feature type="transmembrane region" description="Helical" evidence="2">
    <location>
        <begin position="377"/>
        <end position="397"/>
    </location>
</feature>
<feature type="active site" evidence="1">
    <location>
        <position position="459"/>
    </location>
</feature>
<feature type="active site" evidence="1">
    <location>
        <position position="581"/>
    </location>
</feature>
<feature type="active site" evidence="1">
    <location>
        <position position="584"/>
    </location>
</feature>
<evidence type="ECO:0000250" key="1">
    <source>
        <dbReference type="UniProtKB" id="Q2FV54"/>
    </source>
</evidence>
<evidence type="ECO:0000255" key="2"/>
<evidence type="ECO:0000305" key="3"/>
<protein>
    <recommendedName>
        <fullName>Putative O-acetyltransferase SA0834</fullName>
        <ecNumber>2.3.1.-</ecNumber>
    </recommendedName>
</protein>
<sequence length="604" mass="69414">MNKTKGFTKYKKMRYMPGLDGLRAIAVLGIIIYHLNKQWLTGGFLGVDTFFVISGYLITSLLLKEYDDTGIIKLKSFWIRRLKRLLPAVIVLLMVVGTATLLLKSDNIIRVKHDIIAAIFYVSNWWYIAKDVNYFEQFSFMPLKHLWSLAIEEQFYIFFPVILVTLLLTIKKRYKIGFIFWGVSIISLGLMMFIYSINGDHSRVYFGTDTRLQTLLLGVILAFLWPPFKLKNDPPKVVKYVIDSIGSLSFIVLILLFFIINDETNWIYDGGFYLISILTLFIIASVVHPSTWIAKIFSNPVLVFIGKRSYSLYLWHFAVISFVHSYYVDGQIPVYVYFIDISLTIIFAELSYRFIETPFRKEGIKALNWRPSYIPQFIRMAIVVTLLIPFMLILVGAFNKYGKDIIGEKANSFDTTIEDNYLMRIAPIDNIHIDGLVSEKKKESSDVYNNIKPLLIGDSVMVDIGESFKSSVPKSRIDGKVGRQLYQTLPLVKANYSQYKKSSDQVVLELGTNGDFTVKQLDDLLNQFGKAKIYLVNTRVPRIYEANVNRLLADAAKRKSNVTLIDWNKRSQGHSEYFAPDGVHLEYKGVLALKDEILKALKKK</sequence>
<keyword id="KW-0012">Acyltransferase</keyword>
<keyword id="KW-1003">Cell membrane</keyword>
<keyword id="KW-0472">Membrane</keyword>
<keyword id="KW-0808">Transferase</keyword>
<keyword id="KW-0812">Transmembrane</keyword>
<keyword id="KW-1133">Transmembrane helix</keyword>
<proteinExistence type="inferred from homology"/>
<gene>
    <name type="ordered locus">SA0834</name>
</gene>
<name>OTRF1_STAAN</name>
<dbReference type="EC" id="2.3.1.-"/>
<dbReference type="EMBL" id="BA000018">
    <property type="protein sequence ID" value="BAB42074.1"/>
    <property type="molecule type" value="Genomic_DNA"/>
</dbReference>
<dbReference type="PIR" id="G89864">
    <property type="entry name" value="G89864"/>
</dbReference>
<dbReference type="RefSeq" id="WP_001044230.1">
    <property type="nucleotide sequence ID" value="NC_002745.2"/>
</dbReference>
<dbReference type="SMR" id="Q7A6G7"/>
<dbReference type="EnsemblBacteria" id="BAB42074">
    <property type="protein sequence ID" value="BAB42074"/>
    <property type="gene ID" value="BAB42074"/>
</dbReference>
<dbReference type="KEGG" id="sau:SA0834"/>
<dbReference type="HOGENOM" id="CLU_005679_11_2_9"/>
<dbReference type="GO" id="GO:0005886">
    <property type="term" value="C:plasma membrane"/>
    <property type="evidence" value="ECO:0007669"/>
    <property type="project" value="UniProtKB-SubCell"/>
</dbReference>
<dbReference type="GO" id="GO:0016747">
    <property type="term" value="F:acyltransferase activity, transferring groups other than amino-acyl groups"/>
    <property type="evidence" value="ECO:0007669"/>
    <property type="project" value="InterPro"/>
</dbReference>
<dbReference type="GO" id="GO:0009103">
    <property type="term" value="P:lipopolysaccharide biosynthetic process"/>
    <property type="evidence" value="ECO:0007669"/>
    <property type="project" value="TreeGrafter"/>
</dbReference>
<dbReference type="CDD" id="cd01840">
    <property type="entry name" value="SGNH_hydrolase_yrhL_like"/>
    <property type="match status" value="1"/>
</dbReference>
<dbReference type="FunFam" id="3.40.50.1110:FF:000006">
    <property type="entry name" value="O-acetyltransferase OatA"/>
    <property type="match status" value="1"/>
</dbReference>
<dbReference type="Gene3D" id="3.40.50.1110">
    <property type="entry name" value="SGNH hydrolase"/>
    <property type="match status" value="1"/>
</dbReference>
<dbReference type="InterPro" id="IPR002656">
    <property type="entry name" value="Acyl_transf_3_dom"/>
</dbReference>
<dbReference type="InterPro" id="IPR050879">
    <property type="entry name" value="Acyltransferase_3"/>
</dbReference>
<dbReference type="InterPro" id="IPR036514">
    <property type="entry name" value="SGNH_hydro_sf"/>
</dbReference>
<dbReference type="PANTHER" id="PTHR23028">
    <property type="entry name" value="ACETYLTRANSFERASE"/>
    <property type="match status" value="1"/>
</dbReference>
<dbReference type="PANTHER" id="PTHR23028:SF53">
    <property type="entry name" value="ACYL_TRANSF_3 DOMAIN-CONTAINING PROTEIN"/>
    <property type="match status" value="1"/>
</dbReference>
<dbReference type="Pfam" id="PF01757">
    <property type="entry name" value="Acyl_transf_3"/>
    <property type="match status" value="1"/>
</dbReference>
<dbReference type="SUPFAM" id="SSF52266">
    <property type="entry name" value="SGNH hydrolase"/>
    <property type="match status" value="1"/>
</dbReference>
<comment type="subcellular location">
    <subcellularLocation>
        <location evidence="3">Cell membrane</location>
        <topology evidence="3">Multi-pass membrane protein</topology>
    </subcellularLocation>
</comment>
<comment type="similarity">
    <text evidence="3">Belongs to the acyltransferase 3 family.</text>
</comment>
<organism>
    <name type="scientific">Staphylococcus aureus (strain N315)</name>
    <dbReference type="NCBI Taxonomy" id="158879"/>
    <lineage>
        <taxon>Bacteria</taxon>
        <taxon>Bacillati</taxon>
        <taxon>Bacillota</taxon>
        <taxon>Bacilli</taxon>
        <taxon>Bacillales</taxon>
        <taxon>Staphylococcaceae</taxon>
        <taxon>Staphylococcus</taxon>
    </lineage>
</organism>
<accession>Q7A6G7</accession>
<reference key="1">
    <citation type="journal article" date="2001" name="Lancet">
        <title>Whole genome sequencing of meticillin-resistant Staphylococcus aureus.</title>
        <authorList>
            <person name="Kuroda M."/>
            <person name="Ohta T."/>
            <person name="Uchiyama I."/>
            <person name="Baba T."/>
            <person name="Yuzawa H."/>
            <person name="Kobayashi I."/>
            <person name="Cui L."/>
            <person name="Oguchi A."/>
            <person name="Aoki K."/>
            <person name="Nagai Y."/>
            <person name="Lian J.-Q."/>
            <person name="Ito T."/>
            <person name="Kanamori M."/>
            <person name="Matsumaru H."/>
            <person name="Maruyama A."/>
            <person name="Murakami H."/>
            <person name="Hosoyama A."/>
            <person name="Mizutani-Ui Y."/>
            <person name="Takahashi N.K."/>
            <person name="Sawano T."/>
            <person name="Inoue R."/>
            <person name="Kaito C."/>
            <person name="Sekimizu K."/>
            <person name="Hirakawa H."/>
            <person name="Kuhara S."/>
            <person name="Goto S."/>
            <person name="Yabuzaki J."/>
            <person name="Kanehisa M."/>
            <person name="Yamashita A."/>
            <person name="Oshima K."/>
            <person name="Furuya K."/>
            <person name="Yoshino C."/>
            <person name="Shiba T."/>
            <person name="Hattori M."/>
            <person name="Ogasawara N."/>
            <person name="Hayashi H."/>
            <person name="Hiramatsu K."/>
        </authorList>
    </citation>
    <scope>NUCLEOTIDE SEQUENCE [LARGE SCALE GENOMIC DNA]</scope>
    <source>
        <strain>N315</strain>
    </source>
</reference>